<evidence type="ECO:0000255" key="1">
    <source>
        <dbReference type="HAMAP-Rule" id="MF_00661"/>
    </source>
</evidence>
<evidence type="ECO:0000256" key="2">
    <source>
        <dbReference type="SAM" id="MobiDB-lite"/>
    </source>
</evidence>
<gene>
    <name evidence="1" type="primary">rhlB</name>
    <name type="ordered locus">Ecok1_37460</name>
    <name type="ORF">APECO1_2693</name>
</gene>
<comment type="function">
    <text evidence="1">DEAD-box RNA helicase involved in RNA degradation. Has RNA-dependent ATPase activity and unwinds double-stranded RNA.</text>
</comment>
<comment type="catalytic activity">
    <reaction evidence="1">
        <text>ATP + H2O = ADP + phosphate + H(+)</text>
        <dbReference type="Rhea" id="RHEA:13065"/>
        <dbReference type="ChEBI" id="CHEBI:15377"/>
        <dbReference type="ChEBI" id="CHEBI:15378"/>
        <dbReference type="ChEBI" id="CHEBI:30616"/>
        <dbReference type="ChEBI" id="CHEBI:43474"/>
        <dbReference type="ChEBI" id="CHEBI:456216"/>
        <dbReference type="EC" id="3.6.4.13"/>
    </reaction>
</comment>
<comment type="subunit">
    <text evidence="1">Component of the RNA degradosome, which is a multiprotein complex involved in RNA processing and mRNA degradation.</text>
</comment>
<comment type="subcellular location">
    <subcellularLocation>
        <location evidence="1">Cytoplasm</location>
    </subcellularLocation>
</comment>
<comment type="similarity">
    <text evidence="1">Belongs to the DEAD box helicase family. RhlB subfamily.</text>
</comment>
<keyword id="KW-0067">ATP-binding</keyword>
<keyword id="KW-0963">Cytoplasm</keyword>
<keyword id="KW-0347">Helicase</keyword>
<keyword id="KW-0378">Hydrolase</keyword>
<keyword id="KW-0547">Nucleotide-binding</keyword>
<keyword id="KW-1185">Reference proteome</keyword>
<keyword id="KW-0694">RNA-binding</keyword>
<feature type="chain" id="PRO_1000082839" description="ATP-dependent RNA helicase RhlB">
    <location>
        <begin position="1"/>
        <end position="421"/>
    </location>
</feature>
<feature type="domain" description="Helicase ATP-binding" evidence="1">
    <location>
        <begin position="40"/>
        <end position="219"/>
    </location>
</feature>
<feature type="domain" description="Helicase C-terminal" evidence="1">
    <location>
        <begin position="245"/>
        <end position="390"/>
    </location>
</feature>
<feature type="region of interest" description="Disordered" evidence="2">
    <location>
        <begin position="392"/>
        <end position="421"/>
    </location>
</feature>
<feature type="short sequence motif" description="Q motif">
    <location>
        <begin position="9"/>
        <end position="37"/>
    </location>
</feature>
<feature type="short sequence motif" description="DEAD box">
    <location>
        <begin position="165"/>
        <end position="168"/>
    </location>
</feature>
<feature type="compositionally biased region" description="Low complexity" evidence="2">
    <location>
        <begin position="402"/>
        <end position="414"/>
    </location>
</feature>
<feature type="binding site" evidence="1">
    <location>
        <begin position="53"/>
        <end position="60"/>
    </location>
    <ligand>
        <name>ATP</name>
        <dbReference type="ChEBI" id="CHEBI:30616"/>
    </ligand>
</feature>
<proteinExistence type="inferred from homology"/>
<protein>
    <recommendedName>
        <fullName evidence="1">ATP-dependent RNA helicase RhlB</fullName>
        <ecNumber evidence="1">3.6.4.13</ecNumber>
    </recommendedName>
</protein>
<organism>
    <name type="scientific">Escherichia coli O1:K1 / APEC</name>
    <dbReference type="NCBI Taxonomy" id="405955"/>
    <lineage>
        <taxon>Bacteria</taxon>
        <taxon>Pseudomonadati</taxon>
        <taxon>Pseudomonadota</taxon>
        <taxon>Gammaproteobacteria</taxon>
        <taxon>Enterobacterales</taxon>
        <taxon>Enterobacteriaceae</taxon>
        <taxon>Escherichia</taxon>
    </lineage>
</organism>
<dbReference type="EC" id="3.6.4.13" evidence="1"/>
<dbReference type="EMBL" id="CP000468">
    <property type="protein sequence ID" value="ABJ03240.1"/>
    <property type="molecule type" value="Genomic_DNA"/>
</dbReference>
<dbReference type="RefSeq" id="WP_000047499.1">
    <property type="nucleotide sequence ID" value="NZ_CADILS010000046.1"/>
</dbReference>
<dbReference type="SMR" id="A1AHV0"/>
<dbReference type="GeneID" id="93778164"/>
<dbReference type="KEGG" id="ecv:APECO1_2693"/>
<dbReference type="HOGENOM" id="CLU_003041_1_3_6"/>
<dbReference type="Proteomes" id="UP000008216">
    <property type="component" value="Chromosome"/>
</dbReference>
<dbReference type="GO" id="GO:0005829">
    <property type="term" value="C:cytosol"/>
    <property type="evidence" value="ECO:0007669"/>
    <property type="project" value="TreeGrafter"/>
</dbReference>
<dbReference type="GO" id="GO:0005524">
    <property type="term" value="F:ATP binding"/>
    <property type="evidence" value="ECO:0007669"/>
    <property type="project" value="UniProtKB-UniRule"/>
</dbReference>
<dbReference type="GO" id="GO:0016887">
    <property type="term" value="F:ATP hydrolysis activity"/>
    <property type="evidence" value="ECO:0007669"/>
    <property type="project" value="RHEA"/>
</dbReference>
<dbReference type="GO" id="GO:0003723">
    <property type="term" value="F:RNA binding"/>
    <property type="evidence" value="ECO:0007669"/>
    <property type="project" value="UniProtKB-UniRule"/>
</dbReference>
<dbReference type="GO" id="GO:0003724">
    <property type="term" value="F:RNA helicase activity"/>
    <property type="evidence" value="ECO:0007669"/>
    <property type="project" value="UniProtKB-UniRule"/>
</dbReference>
<dbReference type="GO" id="GO:0006401">
    <property type="term" value="P:RNA catabolic process"/>
    <property type="evidence" value="ECO:0007669"/>
    <property type="project" value="UniProtKB-UniRule"/>
</dbReference>
<dbReference type="CDD" id="cd00268">
    <property type="entry name" value="DEADc"/>
    <property type="match status" value="1"/>
</dbReference>
<dbReference type="CDD" id="cd18787">
    <property type="entry name" value="SF2_C_DEAD"/>
    <property type="match status" value="1"/>
</dbReference>
<dbReference type="FunFam" id="3.40.50.300:FF:000008">
    <property type="entry name" value="ATP-dependent RNA helicase RhlB"/>
    <property type="match status" value="1"/>
</dbReference>
<dbReference type="FunFam" id="3.40.50.300:FF:000312">
    <property type="entry name" value="ATP-dependent RNA helicase RhlB"/>
    <property type="match status" value="1"/>
</dbReference>
<dbReference type="Gene3D" id="3.40.50.300">
    <property type="entry name" value="P-loop containing nucleotide triphosphate hydrolases"/>
    <property type="match status" value="2"/>
</dbReference>
<dbReference type="HAMAP" id="MF_00661">
    <property type="entry name" value="DEAD_helicase_RhlB"/>
    <property type="match status" value="1"/>
</dbReference>
<dbReference type="InterPro" id="IPR011545">
    <property type="entry name" value="DEAD/DEAH_box_helicase_dom"/>
</dbReference>
<dbReference type="InterPro" id="IPR050079">
    <property type="entry name" value="DEAD_box_RNA_helicase"/>
</dbReference>
<dbReference type="InterPro" id="IPR014001">
    <property type="entry name" value="Helicase_ATP-bd"/>
</dbReference>
<dbReference type="InterPro" id="IPR001650">
    <property type="entry name" value="Helicase_C-like"/>
</dbReference>
<dbReference type="InterPro" id="IPR027417">
    <property type="entry name" value="P-loop_NTPase"/>
</dbReference>
<dbReference type="InterPro" id="IPR000629">
    <property type="entry name" value="RNA-helicase_DEAD-box_CS"/>
</dbReference>
<dbReference type="InterPro" id="IPR023554">
    <property type="entry name" value="RNA_helicase_ATP-dep_RhlB"/>
</dbReference>
<dbReference type="InterPro" id="IPR014014">
    <property type="entry name" value="RNA_helicase_DEAD_Q_motif"/>
</dbReference>
<dbReference type="NCBIfam" id="NF003419">
    <property type="entry name" value="PRK04837.1"/>
    <property type="match status" value="1"/>
</dbReference>
<dbReference type="PANTHER" id="PTHR47959:SF10">
    <property type="entry name" value="ATP-DEPENDENT RNA HELICASE RHLB"/>
    <property type="match status" value="1"/>
</dbReference>
<dbReference type="PANTHER" id="PTHR47959">
    <property type="entry name" value="ATP-DEPENDENT RNA HELICASE RHLE-RELATED"/>
    <property type="match status" value="1"/>
</dbReference>
<dbReference type="Pfam" id="PF00270">
    <property type="entry name" value="DEAD"/>
    <property type="match status" value="1"/>
</dbReference>
<dbReference type="Pfam" id="PF00271">
    <property type="entry name" value="Helicase_C"/>
    <property type="match status" value="1"/>
</dbReference>
<dbReference type="SMART" id="SM00487">
    <property type="entry name" value="DEXDc"/>
    <property type="match status" value="1"/>
</dbReference>
<dbReference type="SMART" id="SM00490">
    <property type="entry name" value="HELICc"/>
    <property type="match status" value="1"/>
</dbReference>
<dbReference type="SUPFAM" id="SSF52540">
    <property type="entry name" value="P-loop containing nucleoside triphosphate hydrolases"/>
    <property type="match status" value="1"/>
</dbReference>
<dbReference type="PROSITE" id="PS00039">
    <property type="entry name" value="DEAD_ATP_HELICASE"/>
    <property type="match status" value="1"/>
</dbReference>
<dbReference type="PROSITE" id="PS51192">
    <property type="entry name" value="HELICASE_ATP_BIND_1"/>
    <property type="match status" value="1"/>
</dbReference>
<dbReference type="PROSITE" id="PS51194">
    <property type="entry name" value="HELICASE_CTER"/>
    <property type="match status" value="1"/>
</dbReference>
<dbReference type="PROSITE" id="PS51195">
    <property type="entry name" value="Q_MOTIF"/>
    <property type="match status" value="1"/>
</dbReference>
<accession>A1AHV0</accession>
<reference key="1">
    <citation type="journal article" date="2007" name="J. Bacteriol.">
        <title>The genome sequence of avian pathogenic Escherichia coli strain O1:K1:H7 shares strong similarities with human extraintestinal pathogenic E. coli genomes.</title>
        <authorList>
            <person name="Johnson T.J."/>
            <person name="Kariyawasam S."/>
            <person name="Wannemuehler Y."/>
            <person name="Mangiamele P."/>
            <person name="Johnson S.J."/>
            <person name="Doetkott C."/>
            <person name="Skyberg J.A."/>
            <person name="Lynne A.M."/>
            <person name="Johnson J.R."/>
            <person name="Nolan L.K."/>
        </authorList>
    </citation>
    <scope>NUCLEOTIDE SEQUENCE [LARGE SCALE GENOMIC DNA]</scope>
</reference>
<sequence>MSKTHLTEQKFSDFALHPKVVEALEKKGFHNCTPIQALALPLTLAGRDVAGQAQTGTGKTMAFLTSTFHYLLSHPAIADRKVNQPRALIMAPTRELAVQIHADAEPLAEATGLKLGLAYGGDGYDKQLKVLESGVDILIGTTGRLIDYAKQNHINLGAIQVVVLDEADRMYDLGFIKDIRWLFRRMPPANQRLNMLFSATLSYRVRELAFEQMNNAEYIEVEPEQKTGHRIKEELFYPSNEEKMRLLQTLIEEEWPDRAIIFANTKHRCEEIWGHLAADGHRVGLLTGDVAQKKRLRILDEFTRGDLDILVATDVAARGLHIPAVTHVFNYDLPDDCEDYVHRIGRTGRAGASGHSISLACEEYALNLPAIETYIGHSIPVSKYNPDALMTDLPKPLRLTRPRTGNGPRRTGAPRNRRRSG</sequence>
<name>RHLB_ECOK1</name>